<accession>D4GYG3</accession>
<accession>B5U882</accession>
<name>AGLJ_HALVD</name>
<evidence type="ECO:0000255" key="1"/>
<evidence type="ECO:0000269" key="2">
    <source>
    </source>
</evidence>
<evidence type="ECO:0000269" key="3">
    <source>
    </source>
</evidence>
<evidence type="ECO:0000305" key="4"/>
<gene>
    <name type="primary">aglJ</name>
    <name type="ordered locus">HVO_1517</name>
</gene>
<proteinExistence type="evidence at protein level"/>
<reference key="1">
    <citation type="journal article" date="2010" name="J. Bacteriol.">
        <title>AglJ adds the first sugar of the N-linked pentasaccharide decorating the Haloferax volcanii S-layer glycoprotein.</title>
        <authorList>
            <person name="Kaminski L."/>
            <person name="Abu-Qarn M."/>
            <person name="Guan Z."/>
            <person name="Naparstek S."/>
            <person name="Ventura V.V."/>
            <person name="Raetz C.R."/>
            <person name="Hitchen P.G."/>
            <person name="Dell A."/>
            <person name="Eichler J."/>
        </authorList>
    </citation>
    <scope>NUCLEOTIDE SEQUENCE [GENOMIC DNA]</scope>
    <scope>FUNCTION IN GLYCOSYLATION</scope>
    <scope>PATHWAY</scope>
    <scope>DISRUPTION PHENOTYPE</scope>
    <scope>GENE NAME</scope>
    <source>
        <strain>DS2 / DS70</strain>
    </source>
</reference>
<reference key="2">
    <citation type="journal article" date="2010" name="PLoS ONE">
        <title>The complete genome sequence of Haloferax volcanii DS2, a model archaeon.</title>
        <authorList>
            <person name="Hartman A.L."/>
            <person name="Norais C."/>
            <person name="Badger J.H."/>
            <person name="Delmas S."/>
            <person name="Haldenby S."/>
            <person name="Madupu R."/>
            <person name="Robinson J."/>
            <person name="Khouri H."/>
            <person name="Ren Q."/>
            <person name="Lowe T.M."/>
            <person name="Maupin-Furlow J."/>
            <person name="Pohlschroder M."/>
            <person name="Daniels C."/>
            <person name="Pfeiffer F."/>
            <person name="Allers T."/>
            <person name="Eisen J.A."/>
        </authorList>
    </citation>
    <scope>NUCLEOTIDE SEQUENCE [LARGE SCALE GENOMIC DNA]</scope>
    <source>
        <strain>ATCC 29605 / DSM 3757 / JCM 8879 / NBRC 14742 / NCIMB 2012 / VKM B-1768 / DS2</strain>
    </source>
</reference>
<reference key="3">
    <citation type="journal article" date="2012" name="J. Bacteriol.">
        <title>N-glycosylation of Haloferax volcanii flagellins requires known Agl proteins and is essential for biosynthesis of stable flagella.</title>
        <authorList>
            <person name="Tripepi M."/>
            <person name="You J."/>
            <person name="Temel S."/>
            <person name="Onder O."/>
            <person name="Brisson D."/>
            <person name="Pohlschroder M."/>
        </authorList>
    </citation>
    <scope>FUNCTION IN GLYCOSYLATION OF FLAGELLINS</scope>
    <scope>DISRUPTION PHENOTYPE</scope>
    <source>
        <strain>H53</strain>
    </source>
</reference>
<protein>
    <recommendedName>
        <fullName>Glycosyltransferase AglJ</fullName>
        <ecNumber>2.4.1.-</ecNumber>
    </recommendedName>
    <alternativeName>
        <fullName>Archaeal glycosylation protein J</fullName>
    </alternativeName>
</protein>
<organism>
    <name type="scientific">Haloferax volcanii (strain ATCC 29605 / DSM 3757 / JCM 8879 / NBRC 14742 / NCIMB 2012 / VKM B-1768 / DS2)</name>
    <name type="common">Halobacterium volcanii</name>
    <dbReference type="NCBI Taxonomy" id="309800"/>
    <lineage>
        <taxon>Archaea</taxon>
        <taxon>Methanobacteriati</taxon>
        <taxon>Methanobacteriota</taxon>
        <taxon>Stenosarchaea group</taxon>
        <taxon>Halobacteria</taxon>
        <taxon>Halobacteriales</taxon>
        <taxon>Haloferacaceae</taxon>
        <taxon>Haloferax</taxon>
    </lineage>
</organism>
<sequence>MPTPDAVCILTPTYNEAETIADVISDYRDEGFANVLVIDGGSTDGTRELAEDAGAHVVVQSGSGKGQAVREAVEDHIQAPYVLMLDGDGTYEATDATKMLDPLTEGYDHVIGDRFADMRPGAMTRLNRVGNRIINRAFAFIHGQDFRDILSGYRAFTRESFLDMTLTSDGFGIETEMAVECAKRGIKTTVVPTTYYPRPDGSDTNLDPIRDGGIIFLELYRRAKTNNPLFYFGSVGFASTATGLGLALYVAYEWVVRSISHEVIAVVSMAGILFGVQLLMFGVLSDLILSLHREQMKRIEELE</sequence>
<dbReference type="EC" id="2.4.1.-"/>
<dbReference type="EMBL" id="FM210664">
    <property type="protein sequence ID" value="CAR66203.1"/>
    <property type="molecule type" value="Genomic_DNA"/>
</dbReference>
<dbReference type="EMBL" id="CP001956">
    <property type="protein sequence ID" value="ADE03596.1"/>
    <property type="molecule type" value="Genomic_DNA"/>
</dbReference>
<dbReference type="RefSeq" id="WP_013035422.1">
    <property type="nucleotide sequence ID" value="NC_013967.1"/>
</dbReference>
<dbReference type="SMR" id="D4GYG3"/>
<dbReference type="STRING" id="309800.HVO_1517"/>
<dbReference type="CAZy" id="GT2">
    <property type="family name" value="Glycosyltransferase Family 2"/>
</dbReference>
<dbReference type="EnsemblBacteria" id="ADE03596">
    <property type="protein sequence ID" value="ADE03596"/>
    <property type="gene ID" value="HVO_1517"/>
</dbReference>
<dbReference type="GeneID" id="8925594"/>
<dbReference type="KEGG" id="hvo:HVO_1517"/>
<dbReference type="HOGENOM" id="CLU_033536_7_3_2"/>
<dbReference type="OrthoDB" id="103472at2157"/>
<dbReference type="BioCyc" id="MetaCyc:MONOMER-19283"/>
<dbReference type="UniPathway" id="UPA00977"/>
<dbReference type="Proteomes" id="UP000008243">
    <property type="component" value="Chromosome"/>
</dbReference>
<dbReference type="GO" id="GO:0005886">
    <property type="term" value="C:plasma membrane"/>
    <property type="evidence" value="ECO:0007669"/>
    <property type="project" value="UniProtKB-SubCell"/>
</dbReference>
<dbReference type="GO" id="GO:0016757">
    <property type="term" value="F:glycosyltransferase activity"/>
    <property type="evidence" value="ECO:0007669"/>
    <property type="project" value="UniProtKB-KW"/>
</dbReference>
<dbReference type="GO" id="GO:0045232">
    <property type="term" value="P:S-layer organization"/>
    <property type="evidence" value="ECO:0007669"/>
    <property type="project" value="UniProtKB-UniPathway"/>
</dbReference>
<dbReference type="CDD" id="cd04179">
    <property type="entry name" value="DPM_DPG-synthase_like"/>
    <property type="match status" value="1"/>
</dbReference>
<dbReference type="Gene3D" id="3.90.550.10">
    <property type="entry name" value="Spore Coat Polysaccharide Biosynthesis Protein SpsA, Chain A"/>
    <property type="match status" value="1"/>
</dbReference>
<dbReference type="InterPro" id="IPR026456">
    <property type="entry name" value="GCTrfase_AglJ"/>
</dbReference>
<dbReference type="InterPro" id="IPR001173">
    <property type="entry name" value="Glyco_trans_2-like"/>
</dbReference>
<dbReference type="InterPro" id="IPR050256">
    <property type="entry name" value="Glycosyltransferase_2"/>
</dbReference>
<dbReference type="InterPro" id="IPR029044">
    <property type="entry name" value="Nucleotide-diphossugar_trans"/>
</dbReference>
<dbReference type="NCBIfam" id="TIGR04182">
    <property type="entry name" value="glyco_TIGR04182"/>
    <property type="match status" value="1"/>
</dbReference>
<dbReference type="PANTHER" id="PTHR48090:SF7">
    <property type="entry name" value="RFBJ PROTEIN"/>
    <property type="match status" value="1"/>
</dbReference>
<dbReference type="PANTHER" id="PTHR48090">
    <property type="entry name" value="UNDECAPRENYL-PHOSPHATE 4-DEOXY-4-FORMAMIDO-L-ARABINOSE TRANSFERASE-RELATED"/>
    <property type="match status" value="1"/>
</dbReference>
<dbReference type="Pfam" id="PF00535">
    <property type="entry name" value="Glycos_transf_2"/>
    <property type="match status" value="1"/>
</dbReference>
<dbReference type="SUPFAM" id="SSF53448">
    <property type="entry name" value="Nucleotide-diphospho-sugar transferases"/>
    <property type="match status" value="1"/>
</dbReference>
<comment type="function">
    <text evidence="2 3">Involved in the assembly of a N-linked pentasaccharide that decorates the S-layer glycoprotein and flagellins. Adds the first hexose subunit of the pentasaccharide to the dolichol phosphate carrier.</text>
</comment>
<comment type="pathway">
    <text evidence="2">Cell surface structure biogenesis; S-layer biogenesis.</text>
</comment>
<comment type="subcellular location">
    <subcellularLocation>
        <location evidence="4">Cell membrane</location>
        <topology evidence="4">Multi-pass membrane protein</topology>
    </subcellularLocation>
</comment>
<comment type="disruption phenotype">
    <text evidence="2 3">Deletion of the gene affects the composition of the glycan N linked to the S-layer glycoprotein. Also affects the level of monosaccharide-modified dolichol phosphate. Mutants exhibit defective or limited motility.</text>
</comment>
<comment type="similarity">
    <text evidence="4">Belongs to the glycosyltransferase 2 family.</text>
</comment>
<keyword id="KW-1003">Cell membrane</keyword>
<keyword id="KW-0328">Glycosyltransferase</keyword>
<keyword id="KW-0472">Membrane</keyword>
<keyword id="KW-1185">Reference proteome</keyword>
<keyword id="KW-0808">Transferase</keyword>
<keyword id="KW-0812">Transmembrane</keyword>
<keyword id="KW-1133">Transmembrane helix</keyword>
<feature type="chain" id="PRO_0000415355" description="Glycosyltransferase AglJ">
    <location>
        <begin position="1"/>
        <end position="303"/>
    </location>
</feature>
<feature type="transmembrane region" description="Helical" evidence="1">
    <location>
        <begin position="230"/>
        <end position="250"/>
    </location>
</feature>
<feature type="transmembrane region" description="Helical" evidence="1">
    <location>
        <begin position="263"/>
        <end position="283"/>
    </location>
</feature>